<gene>
    <name type="ordered locus">DvMF_1320</name>
</gene>
<organism>
    <name type="scientific">Nitratidesulfovibrio vulgaris (strain DSM 19637 / Miyazaki F)</name>
    <name type="common">Desulfovibrio vulgaris</name>
    <dbReference type="NCBI Taxonomy" id="883"/>
    <lineage>
        <taxon>Bacteria</taxon>
        <taxon>Pseudomonadati</taxon>
        <taxon>Thermodesulfobacteriota</taxon>
        <taxon>Desulfovibrionia</taxon>
        <taxon>Desulfovibrionales</taxon>
        <taxon>Desulfovibrionaceae</taxon>
        <taxon>Nitratidesulfovibrio</taxon>
    </lineage>
</organism>
<sequence length="139" mass="15761">MGRTIRFGVSLDSDLLEKFDALCDDRCYQTRSEAIRDLIRNTLVQQEWEDTDREIAGTLTIVYDHHKSDLAQRLTEIQHDHHGIIITSLHVHLDHHNCLEVLVLKGPGADVRTLSQRLISTKGVKHGKLSLTTTGQDLT</sequence>
<accession>B8DLK7</accession>
<reference key="1">
    <citation type="submission" date="2008-10" db="EMBL/GenBank/DDBJ databases">
        <title>Complete sequence of Desulfovibrio vulgaris str. 'Miyazaki F'.</title>
        <authorList>
            <person name="Lucas S."/>
            <person name="Copeland A."/>
            <person name="Lapidus A."/>
            <person name="Glavina del Rio T."/>
            <person name="Dalin E."/>
            <person name="Tice H."/>
            <person name="Bruce D."/>
            <person name="Goodwin L."/>
            <person name="Pitluck S."/>
            <person name="Sims D."/>
            <person name="Brettin T."/>
            <person name="Detter J.C."/>
            <person name="Han C."/>
            <person name="Larimer F."/>
            <person name="Land M."/>
            <person name="Hauser L."/>
            <person name="Kyrpides N."/>
            <person name="Mikhailova N."/>
            <person name="Hazen T.C."/>
            <person name="Richardson P."/>
        </authorList>
    </citation>
    <scope>NUCLEOTIDE SEQUENCE [LARGE SCALE GENOMIC DNA]</scope>
    <source>
        <strain>DSM 19637 / Miyazaki F</strain>
    </source>
</reference>
<comment type="function">
    <text evidence="1">Transcriptional regulator.</text>
</comment>
<comment type="cofactor">
    <cofactor evidence="1">
        <name>Ni(2+)</name>
        <dbReference type="ChEBI" id="CHEBI:49786"/>
    </cofactor>
    <text evidence="1">Binds 1 nickel ion per subunit.</text>
</comment>
<comment type="similarity">
    <text evidence="1">Belongs to the transcriptional regulatory CopG/NikR family.</text>
</comment>
<feature type="chain" id="PRO_1000125813" description="Putative nickel-responsive regulator">
    <location>
        <begin position="1"/>
        <end position="139"/>
    </location>
</feature>
<feature type="binding site" evidence="1">
    <location>
        <position position="79"/>
    </location>
    <ligand>
        <name>Ni(2+)</name>
        <dbReference type="ChEBI" id="CHEBI:49786"/>
    </ligand>
</feature>
<feature type="binding site" evidence="1">
    <location>
        <position position="90"/>
    </location>
    <ligand>
        <name>Ni(2+)</name>
        <dbReference type="ChEBI" id="CHEBI:49786"/>
    </ligand>
</feature>
<feature type="binding site" evidence="1">
    <location>
        <position position="92"/>
    </location>
    <ligand>
        <name>Ni(2+)</name>
        <dbReference type="ChEBI" id="CHEBI:49786"/>
    </ligand>
</feature>
<feature type="binding site" evidence="1">
    <location>
        <position position="98"/>
    </location>
    <ligand>
        <name>Ni(2+)</name>
        <dbReference type="ChEBI" id="CHEBI:49786"/>
    </ligand>
</feature>
<name>NIKR_NITV9</name>
<keyword id="KW-0238">DNA-binding</keyword>
<keyword id="KW-0479">Metal-binding</keyword>
<keyword id="KW-0533">Nickel</keyword>
<keyword id="KW-0804">Transcription</keyword>
<keyword id="KW-0805">Transcription regulation</keyword>
<evidence type="ECO:0000255" key="1">
    <source>
        <dbReference type="HAMAP-Rule" id="MF_00476"/>
    </source>
</evidence>
<dbReference type="EMBL" id="CP001197">
    <property type="protein sequence ID" value="ACL08269.1"/>
    <property type="molecule type" value="Genomic_DNA"/>
</dbReference>
<dbReference type="SMR" id="B8DLK7"/>
<dbReference type="STRING" id="883.DvMF_1320"/>
<dbReference type="KEGG" id="dvm:DvMF_1320"/>
<dbReference type="eggNOG" id="COG0864">
    <property type="taxonomic scope" value="Bacteria"/>
</dbReference>
<dbReference type="HOGENOM" id="CLU_113319_1_2_7"/>
<dbReference type="OrthoDB" id="9806294at2"/>
<dbReference type="GO" id="GO:0003677">
    <property type="term" value="F:DNA binding"/>
    <property type="evidence" value="ECO:0007669"/>
    <property type="project" value="UniProtKB-KW"/>
</dbReference>
<dbReference type="GO" id="GO:0003700">
    <property type="term" value="F:DNA-binding transcription factor activity"/>
    <property type="evidence" value="ECO:0007669"/>
    <property type="project" value="UniProtKB-UniRule"/>
</dbReference>
<dbReference type="GO" id="GO:0016151">
    <property type="term" value="F:nickel cation binding"/>
    <property type="evidence" value="ECO:0007669"/>
    <property type="project" value="UniProtKB-UniRule"/>
</dbReference>
<dbReference type="GO" id="GO:0010045">
    <property type="term" value="P:response to nickel cation"/>
    <property type="evidence" value="ECO:0007669"/>
    <property type="project" value="InterPro"/>
</dbReference>
<dbReference type="CDD" id="cd22231">
    <property type="entry name" value="RHH_NikR_HicB-like"/>
    <property type="match status" value="1"/>
</dbReference>
<dbReference type="Gene3D" id="3.30.70.1150">
    <property type="entry name" value="ACT-like. Chain A, domain 2"/>
    <property type="match status" value="1"/>
</dbReference>
<dbReference type="Gene3D" id="1.10.1220.10">
    <property type="entry name" value="Met repressor-like"/>
    <property type="match status" value="1"/>
</dbReference>
<dbReference type="HAMAP" id="MF_00476">
    <property type="entry name" value="NikR"/>
    <property type="match status" value="1"/>
</dbReference>
<dbReference type="InterPro" id="IPR027271">
    <property type="entry name" value="Acetolactate_synth/TF_NikR_C"/>
</dbReference>
<dbReference type="InterPro" id="IPR045865">
    <property type="entry name" value="ACT-like_dom_sf"/>
</dbReference>
<dbReference type="InterPro" id="IPR013321">
    <property type="entry name" value="Arc_rbn_hlx_hlx"/>
</dbReference>
<dbReference type="InterPro" id="IPR002145">
    <property type="entry name" value="CopG"/>
</dbReference>
<dbReference type="InterPro" id="IPR050192">
    <property type="entry name" value="CopG/NikR_regulator"/>
</dbReference>
<dbReference type="InterPro" id="IPR022988">
    <property type="entry name" value="Ni_resp_reg_NikR"/>
</dbReference>
<dbReference type="InterPro" id="IPR010985">
    <property type="entry name" value="Ribbon_hlx_hlx"/>
</dbReference>
<dbReference type="InterPro" id="IPR014864">
    <property type="entry name" value="TF_NikR_Ni-bd_C"/>
</dbReference>
<dbReference type="NCBIfam" id="NF001884">
    <property type="entry name" value="PRK00630.1"/>
    <property type="match status" value="1"/>
</dbReference>
<dbReference type="NCBIfam" id="NF002169">
    <property type="entry name" value="PRK01002.1"/>
    <property type="match status" value="1"/>
</dbReference>
<dbReference type="NCBIfam" id="NF002815">
    <property type="entry name" value="PRK02967.1"/>
    <property type="match status" value="1"/>
</dbReference>
<dbReference type="NCBIfam" id="NF003381">
    <property type="entry name" value="PRK04460.1"/>
    <property type="match status" value="1"/>
</dbReference>
<dbReference type="PANTHER" id="PTHR34719">
    <property type="entry name" value="NICKEL-RESPONSIVE REGULATOR"/>
    <property type="match status" value="1"/>
</dbReference>
<dbReference type="PANTHER" id="PTHR34719:SF2">
    <property type="entry name" value="NICKEL-RESPONSIVE REGULATOR"/>
    <property type="match status" value="1"/>
</dbReference>
<dbReference type="Pfam" id="PF08753">
    <property type="entry name" value="NikR_C"/>
    <property type="match status" value="1"/>
</dbReference>
<dbReference type="Pfam" id="PF01402">
    <property type="entry name" value="RHH_1"/>
    <property type="match status" value="1"/>
</dbReference>
<dbReference type="SUPFAM" id="SSF55021">
    <property type="entry name" value="ACT-like"/>
    <property type="match status" value="1"/>
</dbReference>
<dbReference type="SUPFAM" id="SSF47598">
    <property type="entry name" value="Ribbon-helix-helix"/>
    <property type="match status" value="1"/>
</dbReference>
<proteinExistence type="inferred from homology"/>
<protein>
    <recommendedName>
        <fullName evidence="1">Putative nickel-responsive regulator</fullName>
    </recommendedName>
</protein>